<organism>
    <name type="scientific">Francisella tularensis subsp. tularensis (strain SCHU S4 / Schu 4)</name>
    <dbReference type="NCBI Taxonomy" id="177416"/>
    <lineage>
        <taxon>Bacteria</taxon>
        <taxon>Pseudomonadati</taxon>
        <taxon>Pseudomonadota</taxon>
        <taxon>Gammaproteobacteria</taxon>
        <taxon>Thiotrichales</taxon>
        <taxon>Francisellaceae</taxon>
        <taxon>Francisella</taxon>
    </lineage>
</organism>
<dbReference type="EMBL" id="AJ749949">
    <property type="protein sequence ID" value="CAG46269.1"/>
    <property type="molecule type" value="Genomic_DNA"/>
</dbReference>
<dbReference type="RefSeq" id="WP_003022568.1">
    <property type="nucleotide sequence ID" value="NC_006570.2"/>
</dbReference>
<dbReference type="RefSeq" id="YP_170549.1">
    <property type="nucleotide sequence ID" value="NC_006570.2"/>
</dbReference>
<dbReference type="PDB" id="8V1K">
    <property type="method" value="X-ray"/>
    <property type="resolution" value="1.80 A"/>
    <property type="chains" value="A/B=17-205"/>
</dbReference>
<dbReference type="PDBsum" id="8V1K"/>
<dbReference type="SMR" id="Q5NEJ3"/>
<dbReference type="STRING" id="177416.FTT_1636"/>
<dbReference type="DNASU" id="3190782"/>
<dbReference type="EnsemblBacteria" id="CAG46269">
    <property type="protein sequence ID" value="CAG46269"/>
    <property type="gene ID" value="FTT_1636"/>
</dbReference>
<dbReference type="KEGG" id="ftu:FTT_1636"/>
<dbReference type="eggNOG" id="COG2834">
    <property type="taxonomic scope" value="Bacteria"/>
</dbReference>
<dbReference type="OrthoDB" id="9787361at2"/>
<dbReference type="Proteomes" id="UP000001174">
    <property type="component" value="Chromosome"/>
</dbReference>
<dbReference type="GO" id="GO:0030288">
    <property type="term" value="C:outer membrane-bounded periplasmic space"/>
    <property type="evidence" value="ECO:0007669"/>
    <property type="project" value="TreeGrafter"/>
</dbReference>
<dbReference type="GO" id="GO:0044874">
    <property type="term" value="P:lipoprotein localization to outer membrane"/>
    <property type="evidence" value="ECO:0007669"/>
    <property type="project" value="UniProtKB-UniRule"/>
</dbReference>
<dbReference type="GO" id="GO:0042953">
    <property type="term" value="P:lipoprotein transport"/>
    <property type="evidence" value="ECO:0007669"/>
    <property type="project" value="InterPro"/>
</dbReference>
<dbReference type="CDD" id="cd16325">
    <property type="entry name" value="LolA"/>
    <property type="match status" value="1"/>
</dbReference>
<dbReference type="Gene3D" id="2.50.20.10">
    <property type="entry name" value="Lipoprotein localisation LolA/LolB/LppX"/>
    <property type="match status" value="1"/>
</dbReference>
<dbReference type="HAMAP" id="MF_00240">
    <property type="entry name" value="LolA"/>
    <property type="match status" value="1"/>
</dbReference>
<dbReference type="InterPro" id="IPR029046">
    <property type="entry name" value="LolA/LolB/LppX"/>
</dbReference>
<dbReference type="InterPro" id="IPR004564">
    <property type="entry name" value="OM_lipoprot_carrier_LolA-like"/>
</dbReference>
<dbReference type="InterPro" id="IPR018323">
    <property type="entry name" value="OM_lipoprot_carrier_LolA_Pbac"/>
</dbReference>
<dbReference type="NCBIfam" id="TIGR00547">
    <property type="entry name" value="lolA"/>
    <property type="match status" value="1"/>
</dbReference>
<dbReference type="PANTHER" id="PTHR35869">
    <property type="entry name" value="OUTER-MEMBRANE LIPOPROTEIN CARRIER PROTEIN"/>
    <property type="match status" value="1"/>
</dbReference>
<dbReference type="PANTHER" id="PTHR35869:SF1">
    <property type="entry name" value="OUTER-MEMBRANE LIPOPROTEIN CARRIER PROTEIN"/>
    <property type="match status" value="1"/>
</dbReference>
<dbReference type="Pfam" id="PF03548">
    <property type="entry name" value="LolA"/>
    <property type="match status" value="1"/>
</dbReference>
<dbReference type="SUPFAM" id="SSF89392">
    <property type="entry name" value="Prokaryotic lipoproteins and lipoprotein localization factors"/>
    <property type="match status" value="1"/>
</dbReference>
<reference key="1">
    <citation type="journal article" date="2005" name="Nat. Genet.">
        <title>The complete genome sequence of Francisella tularensis, the causative agent of tularemia.</title>
        <authorList>
            <person name="Larsson P."/>
            <person name="Oyston P.C.F."/>
            <person name="Chain P."/>
            <person name="Chu M.C."/>
            <person name="Duffield M."/>
            <person name="Fuxelius H.-H."/>
            <person name="Garcia E."/>
            <person name="Haelltorp G."/>
            <person name="Johansson D."/>
            <person name="Isherwood K.E."/>
            <person name="Karp P.D."/>
            <person name="Larsson E."/>
            <person name="Liu Y."/>
            <person name="Michell S."/>
            <person name="Prior J."/>
            <person name="Prior R."/>
            <person name="Malfatti S."/>
            <person name="Sjoestedt A."/>
            <person name="Svensson K."/>
            <person name="Thompson N."/>
            <person name="Vergez L."/>
            <person name="Wagg J.K."/>
            <person name="Wren B.W."/>
            <person name="Lindler L.E."/>
            <person name="Andersson S.G.E."/>
            <person name="Forsman M."/>
            <person name="Titball R.W."/>
        </authorList>
    </citation>
    <scope>NUCLEOTIDE SEQUENCE [LARGE SCALE GENOMIC DNA]</scope>
    <source>
        <strain>SCHU S4 / Schu 4</strain>
    </source>
</reference>
<protein>
    <recommendedName>
        <fullName evidence="1">Outer-membrane lipoprotein carrier protein</fullName>
    </recommendedName>
</protein>
<gene>
    <name evidence="1" type="primary">lolA</name>
    <name type="ordered locus">FTT_1636</name>
</gene>
<name>LOLA_FRATT</name>
<comment type="function">
    <text evidence="1">Participates in the translocation of lipoproteins from the inner membrane to the outer membrane. Only forms a complex with a lipoprotein if the residue after the N-terminal Cys is not an aspartate (The Asp acts as a targeting signal to indicate that the lipoprotein should stay in the inner membrane).</text>
</comment>
<comment type="subunit">
    <text evidence="1">Monomer.</text>
</comment>
<comment type="subcellular location">
    <subcellularLocation>
        <location evidence="1">Periplasm</location>
    </subcellularLocation>
</comment>
<comment type="similarity">
    <text evidence="1">Belongs to the LolA family.</text>
</comment>
<evidence type="ECO:0000255" key="1">
    <source>
        <dbReference type="HAMAP-Rule" id="MF_00240"/>
    </source>
</evidence>
<keyword id="KW-0002">3D-structure</keyword>
<keyword id="KW-0143">Chaperone</keyword>
<keyword id="KW-0574">Periplasm</keyword>
<keyword id="KW-0653">Protein transport</keyword>
<keyword id="KW-1185">Reference proteome</keyword>
<keyword id="KW-0732">Signal</keyword>
<keyword id="KW-0813">Transport</keyword>
<accession>Q5NEJ3</accession>
<feature type="signal peptide" evidence="1">
    <location>
        <begin position="1"/>
        <end position="19"/>
    </location>
</feature>
<feature type="chain" id="PRO_1000071828" description="Outer-membrane lipoprotein carrier protein">
    <location>
        <begin position="20"/>
        <end position="205"/>
    </location>
</feature>
<sequence>MKKIIICFIFVFSINVSFADATSELIDKIKNIHSMTANFNQKLIDGQTNNNLNSKGNMSLKKPQYFKWITTSPNNQEIVSNGTKLWIYDGDLDQLIIKKVSNDIAQFPYLILLSKNTNNINKLFTVTAQDNNSYILKPKNDQMIDSIKIKFTPNNQLEYLEISTSLNQFTKIEFNNVKTDVDISNTSFDFKAPQNTDIIDETKFA</sequence>
<proteinExistence type="evidence at protein level"/>